<organism>
    <name type="scientific">Macaca fascicularis</name>
    <name type="common">Crab-eating macaque</name>
    <name type="synonym">Cynomolgus monkey</name>
    <dbReference type="NCBI Taxonomy" id="9541"/>
    <lineage>
        <taxon>Eukaryota</taxon>
        <taxon>Metazoa</taxon>
        <taxon>Chordata</taxon>
        <taxon>Craniata</taxon>
        <taxon>Vertebrata</taxon>
        <taxon>Euteleostomi</taxon>
        <taxon>Mammalia</taxon>
        <taxon>Eutheria</taxon>
        <taxon>Euarchontoglires</taxon>
        <taxon>Primates</taxon>
        <taxon>Haplorrhini</taxon>
        <taxon>Catarrhini</taxon>
        <taxon>Cercopithecidae</taxon>
        <taxon>Cercopithecinae</taxon>
        <taxon>Macaca</taxon>
    </lineage>
</organism>
<keyword id="KW-0378">Hydrolase</keyword>
<keyword id="KW-0479">Metal-binding</keyword>
<keyword id="KW-0597">Phosphoprotein</keyword>
<keyword id="KW-1185">Reference proteome</keyword>
<keyword id="KW-0819">tRNA processing</keyword>
<keyword id="KW-0862">Zinc</keyword>
<protein>
    <recommendedName>
        <fullName>tRNA-specific adenosine deaminase 1</fullName>
        <ecNumber>3.5.4.34</ecNumber>
    </recommendedName>
    <alternativeName>
        <fullName>tRNA-specific adenosine-37 deaminase</fullName>
    </alternativeName>
</protein>
<sequence length="502" mass="55490">MWTADEIALLCYEHYGIRLPKKGKPEPNHEWTLLAAVVKIQSPADQDCDTPDKPAQVTKEVVSMGTGTKCIGQSKMRKSGDILNDSHAEVIARRNFQRYLLHQLQLAATLKEDSIFVPGTQKGLWKLRRDLFFVFFSSHTPCGDASIIPMLEFEDQPCCPVIRDWASSSSVEASSNLEAPGNERKCEDLDSPVTKKMRLEPMTAAREVTNGATHHQSFGKQESGPISPGINSCNLTVEGLAAVTRIAPGSAKVIDVYRTGAKCVPGEAGDSRKPGAAFHQVGLLRVKPGRGDRTRSMSCSDKMARWNVLGCQGALLMHFLEEPIYLSAVVIGKCPYSQEAMQRALTGRRQNVSALPKGFGVQELKILQSDLLFEQSRCAVQAKRADSPGRLVPCGAAISWSAVPEQPLDVTANGFPQGTTKKTIGSLQARSQISKVELLRSFQKLLSRIARDKWPDSLRVQKLDTYQDYKEAASSYQEAWSTLRKQAFGSWIRNPPDYHQFK</sequence>
<name>ADAT1_MACFA</name>
<gene>
    <name type="primary">ADAT1</name>
    <name type="ORF">QtsA-14745</name>
</gene>
<dbReference type="EC" id="3.5.4.34"/>
<dbReference type="EMBL" id="AB168782">
    <property type="protein sequence ID" value="BAE00889.1"/>
    <property type="molecule type" value="mRNA"/>
</dbReference>
<dbReference type="RefSeq" id="NP_001270373.1">
    <property type="nucleotide sequence ID" value="NM_001283444.1"/>
</dbReference>
<dbReference type="SMR" id="Q4R7N3"/>
<dbReference type="STRING" id="9541.ENSMFAP00000012891"/>
<dbReference type="eggNOG" id="KOG2777">
    <property type="taxonomic scope" value="Eukaryota"/>
</dbReference>
<dbReference type="Proteomes" id="UP000233100">
    <property type="component" value="Unplaced"/>
</dbReference>
<dbReference type="GO" id="GO:0046872">
    <property type="term" value="F:metal ion binding"/>
    <property type="evidence" value="ECO:0007669"/>
    <property type="project" value="UniProtKB-KW"/>
</dbReference>
<dbReference type="GO" id="GO:0003723">
    <property type="term" value="F:RNA binding"/>
    <property type="evidence" value="ECO:0000250"/>
    <property type="project" value="UniProtKB"/>
</dbReference>
<dbReference type="GO" id="GO:0008251">
    <property type="term" value="F:tRNA-specific adenosine deaminase activity"/>
    <property type="evidence" value="ECO:0000250"/>
    <property type="project" value="UniProtKB"/>
</dbReference>
<dbReference type="GO" id="GO:0043829">
    <property type="term" value="F:tRNA-specific adenosine-37 deaminase activity"/>
    <property type="evidence" value="ECO:0007669"/>
    <property type="project" value="UniProtKB-EC"/>
</dbReference>
<dbReference type="GO" id="GO:0008033">
    <property type="term" value="P:tRNA processing"/>
    <property type="evidence" value="ECO:0000250"/>
    <property type="project" value="UniProtKB"/>
</dbReference>
<dbReference type="InterPro" id="IPR002466">
    <property type="entry name" value="A_deamin"/>
</dbReference>
<dbReference type="PANTHER" id="PTHR46516">
    <property type="entry name" value="TRNA-SPECIFIC ADENOSINE DEAMINASE 1"/>
    <property type="match status" value="1"/>
</dbReference>
<dbReference type="PANTHER" id="PTHR46516:SF1">
    <property type="entry name" value="TRNA-SPECIFIC ADENOSINE DEAMINASE 1"/>
    <property type="match status" value="1"/>
</dbReference>
<dbReference type="Pfam" id="PF02137">
    <property type="entry name" value="A_deamin"/>
    <property type="match status" value="1"/>
</dbReference>
<dbReference type="SMART" id="SM00552">
    <property type="entry name" value="ADEAMc"/>
    <property type="match status" value="1"/>
</dbReference>
<dbReference type="PROSITE" id="PS50141">
    <property type="entry name" value="A_DEAMIN_EDITASE"/>
    <property type="match status" value="1"/>
</dbReference>
<proteinExistence type="evidence at transcript level"/>
<feature type="chain" id="PRO_0000287647" description="tRNA-specific adenosine deaminase 1">
    <location>
        <begin position="1"/>
        <end position="502"/>
    </location>
</feature>
<feature type="domain" description="A to I editase" evidence="3">
    <location>
        <begin position="63"/>
        <end position="501"/>
    </location>
</feature>
<feature type="active site" description="Proton donor" evidence="3">
    <location>
        <position position="89"/>
    </location>
</feature>
<feature type="binding site" evidence="3">
    <location>
        <position position="87"/>
    </location>
    <ligand>
        <name>Zn(2+)</name>
        <dbReference type="ChEBI" id="CHEBI:29105"/>
    </ligand>
</feature>
<feature type="binding site" evidence="1">
    <location>
        <position position="93"/>
    </location>
    <ligand>
        <name>1D-myo-inositol hexakisphosphate</name>
        <dbReference type="ChEBI" id="CHEBI:58130"/>
    </ligand>
</feature>
<feature type="binding site" evidence="1">
    <location>
        <position position="94"/>
    </location>
    <ligand>
        <name>1D-myo-inositol hexakisphosphate</name>
        <dbReference type="ChEBI" id="CHEBI:58130"/>
    </ligand>
</feature>
<feature type="binding site" evidence="3">
    <location>
        <position position="142"/>
    </location>
    <ligand>
        <name>Zn(2+)</name>
        <dbReference type="ChEBI" id="CHEBI:29105"/>
    </ligand>
</feature>
<feature type="binding site" evidence="3">
    <location>
        <position position="299"/>
    </location>
    <ligand>
        <name>Zn(2+)</name>
        <dbReference type="ChEBI" id="CHEBI:29105"/>
    </ligand>
</feature>
<feature type="binding site" evidence="1">
    <location>
        <position position="302"/>
    </location>
    <ligand>
        <name>1D-myo-inositol hexakisphosphate</name>
        <dbReference type="ChEBI" id="CHEBI:58130"/>
    </ligand>
</feature>
<feature type="binding site" evidence="1">
    <location>
        <position position="305"/>
    </location>
    <ligand>
        <name>1D-myo-inositol hexakisphosphate</name>
        <dbReference type="ChEBI" id="CHEBI:58130"/>
    </ligand>
</feature>
<feature type="binding site" evidence="1">
    <location>
        <position position="435"/>
    </location>
    <ligand>
        <name>1D-myo-inositol hexakisphosphate</name>
        <dbReference type="ChEBI" id="CHEBI:58130"/>
    </ligand>
</feature>
<feature type="binding site" evidence="1">
    <location>
        <position position="470"/>
    </location>
    <ligand>
        <name>1D-myo-inositol hexakisphosphate</name>
        <dbReference type="ChEBI" id="CHEBI:58130"/>
    </ligand>
</feature>
<feature type="modified residue" description="Phosphoserine" evidence="2">
    <location>
        <position position="191"/>
    </location>
</feature>
<comment type="function">
    <text evidence="1">Specifically deaminates adenosine-37 to inosine in tRNA-Ala.</text>
</comment>
<comment type="catalytic activity">
    <reaction>
        <text>adenosine(37) in tRNA(Ala) + H2O + H(+) = inosine(37) in tRNA(Ala) + NH4(+)</text>
        <dbReference type="Rhea" id="RHEA:50968"/>
        <dbReference type="Rhea" id="RHEA-COMP:12855"/>
        <dbReference type="Rhea" id="RHEA-COMP:12856"/>
        <dbReference type="ChEBI" id="CHEBI:15377"/>
        <dbReference type="ChEBI" id="CHEBI:15378"/>
        <dbReference type="ChEBI" id="CHEBI:28938"/>
        <dbReference type="ChEBI" id="CHEBI:74411"/>
        <dbReference type="ChEBI" id="CHEBI:82852"/>
        <dbReference type="EC" id="3.5.4.34"/>
    </reaction>
</comment>
<comment type="cofactor">
    <cofactor evidence="1">
        <name>1D-myo-inositol hexakisphosphate</name>
        <dbReference type="ChEBI" id="CHEBI:58130"/>
    </cofactor>
    <text evidence="1">Binds 1 myo-inositol hexakisphosphate (IP6) per subunit.</text>
</comment>
<comment type="similarity">
    <text evidence="4">Belongs to the ADAT1 family.</text>
</comment>
<evidence type="ECO:0000250" key="1"/>
<evidence type="ECO:0000250" key="2">
    <source>
        <dbReference type="UniProtKB" id="Q9JHI2"/>
    </source>
</evidence>
<evidence type="ECO:0000255" key="3">
    <source>
        <dbReference type="PROSITE-ProRule" id="PRU00240"/>
    </source>
</evidence>
<evidence type="ECO:0000305" key="4"/>
<reference key="1">
    <citation type="submission" date="2005-06" db="EMBL/GenBank/DDBJ databases">
        <title>DNA sequences of macaque genes expressed in brain or testis and its evolutionary implications.</title>
        <authorList>
            <consortium name="International consortium for macaque cDNA sequencing and analysis"/>
        </authorList>
    </citation>
    <scope>NUCLEOTIDE SEQUENCE [LARGE SCALE MRNA]</scope>
    <source>
        <tissue>Testis</tissue>
    </source>
</reference>
<accession>Q4R7N3</accession>